<name>SH2D3_MOUSE</name>
<proteinExistence type="evidence at protein level"/>
<feature type="chain" id="PRO_0000228834" description="SH2 domain-containing protein 3C">
    <location>
        <begin position="1"/>
        <end position="854"/>
    </location>
</feature>
<feature type="domain" description="SH2" evidence="4">
    <location>
        <begin position="215"/>
        <end position="314"/>
    </location>
</feature>
<feature type="domain" description="Ras-GEF" evidence="3">
    <location>
        <begin position="580"/>
        <end position="848"/>
    </location>
</feature>
<feature type="region of interest" description="Disordered" evidence="5">
    <location>
        <begin position="34"/>
        <end position="129"/>
    </location>
</feature>
<feature type="region of interest" description="Disordered" evidence="5">
    <location>
        <begin position="330"/>
        <end position="384"/>
    </location>
</feature>
<feature type="region of interest" description="Disordered" evidence="5">
    <location>
        <begin position="398"/>
        <end position="417"/>
    </location>
</feature>
<feature type="region of interest" description="Disordered" evidence="5">
    <location>
        <begin position="422"/>
        <end position="520"/>
    </location>
</feature>
<feature type="compositionally biased region" description="Low complexity" evidence="5">
    <location>
        <begin position="34"/>
        <end position="43"/>
    </location>
</feature>
<feature type="compositionally biased region" description="Basic and acidic residues" evidence="5">
    <location>
        <begin position="99"/>
        <end position="124"/>
    </location>
</feature>
<feature type="compositionally biased region" description="Low complexity" evidence="5">
    <location>
        <begin position="333"/>
        <end position="347"/>
    </location>
</feature>
<feature type="compositionally biased region" description="Low complexity" evidence="5">
    <location>
        <begin position="400"/>
        <end position="415"/>
    </location>
</feature>
<feature type="compositionally biased region" description="Low complexity" evidence="5">
    <location>
        <begin position="422"/>
        <end position="436"/>
    </location>
</feature>
<feature type="compositionally biased region" description="Low complexity" evidence="5">
    <location>
        <begin position="474"/>
        <end position="485"/>
    </location>
</feature>
<feature type="compositionally biased region" description="Basic and acidic residues" evidence="5">
    <location>
        <begin position="508"/>
        <end position="520"/>
    </location>
</feature>
<feature type="modified residue" description="Phosphoserine" evidence="17">
    <location>
        <position position="22"/>
    </location>
</feature>
<feature type="modified residue" description="Phosphotyrosine" evidence="9">
    <location>
        <position position="273"/>
    </location>
</feature>
<feature type="modified residue" description="Phosphotyrosine" evidence="9">
    <location>
        <position position="278"/>
    </location>
</feature>
<feature type="modified residue" description="Phosphoserine" evidence="17">
    <location>
        <position position="354"/>
    </location>
</feature>
<feature type="modified residue" description="Phosphoserine" evidence="16 17">
    <location>
        <position position="435"/>
    </location>
</feature>
<feature type="modified residue" description="Phosphotyrosine" evidence="9">
    <location>
        <position position="787"/>
    </location>
</feature>
<feature type="splice variant" id="VSP_017709" description="In isoform 2." evidence="14 15">
    <original>MTEMPKKTGRKFKFFKFKGLGSLSNLPRSFSLRRSSASASIRSCPEPDTFEATQDDMVTLPKSPPAYARSSDMYSHMGTMPRPNIKKAQKQQAVQKAQEVSRESHLVSRRLPEPPDLEAAKEAGEGTEALLEDTAPSAVEVDPMRELEDLTVDTEKEQVPGDVSPE</original>
    <variation>MTAVGRRCSALEPR</variation>
    <location>
        <begin position="1"/>
        <end position="166"/>
    </location>
</feature>
<feature type="mutagenesis site" description="Abolishes interaction with NEDD9. Abolishes interaction with BCAR1. Abolishes phosphorylation of NEDD9. Abolishes promotion of migration and adhesion in T cells." evidence="10 13">
    <original>Y</original>
    <variation>E</variation>
    <location>
        <position position="787"/>
    </location>
</feature>
<feature type="mutagenesis site" description="Disrupts binding to BCAR1 and inhibits EGF-induced tyrosine phosphorylation." evidence="9">
    <original>Y</original>
    <variation>E</variation>
    <location>
        <position position="787"/>
    </location>
</feature>
<gene>
    <name type="primary">Sh2d3c</name>
    <name type="synonym">Chat</name>
    <name type="synonym">Shep1</name>
</gene>
<organism>
    <name type="scientific">Mus musculus</name>
    <name type="common">Mouse</name>
    <dbReference type="NCBI Taxonomy" id="10090"/>
    <lineage>
        <taxon>Eukaryota</taxon>
        <taxon>Metazoa</taxon>
        <taxon>Chordata</taxon>
        <taxon>Craniata</taxon>
        <taxon>Vertebrata</taxon>
        <taxon>Euteleostomi</taxon>
        <taxon>Mammalia</taxon>
        <taxon>Eutheria</taxon>
        <taxon>Euarchontoglires</taxon>
        <taxon>Glires</taxon>
        <taxon>Rodentia</taxon>
        <taxon>Myomorpha</taxon>
        <taxon>Muroidea</taxon>
        <taxon>Muridae</taxon>
        <taxon>Murinae</taxon>
        <taxon>Mus</taxon>
        <taxon>Mus</taxon>
    </lineage>
</organism>
<reference key="1">
    <citation type="journal article" date="1999" name="J. Biol. Chem.">
        <title>A novel signaling intermediate, SHEP1, directly couples Eph receptors to R-Ras and Rap1A.</title>
        <authorList>
            <person name="Dodelet V.C."/>
            <person name="Pazzagli C."/>
            <person name="Zisch A.H."/>
            <person name="Hauser C.A."/>
            <person name="Pasquale E.B."/>
        </authorList>
    </citation>
    <scope>NUCLEOTIDE SEQUENCE [MRNA] (ISOFORM 1)</scope>
    <scope>INTERACTION WITH EPHB2</scope>
    <scope>TISSUE SPECIFICITY</scope>
    <scope>PHOSPHORYLATION</scope>
</reference>
<reference key="2">
    <citation type="journal article" date="2000" name="J. Biol. Chem.">
        <title>Chat, a Cas/HEF1-associated adaptor protein that integrates multiple signaling pathways.</title>
        <authorList>
            <person name="Sakakibara A."/>
            <person name="Hattori S."/>
        </authorList>
    </citation>
    <scope>NUCLEOTIDE SEQUENCE [MRNA] (ISOFORM 2)</scope>
    <scope>FUNCTION</scope>
    <scope>INTERACTION WITH BCAR1 AND NEDD9</scope>
    <scope>TISSUE SPECIFICITY</scope>
    <scope>SUBCELLULAR LOCATION</scope>
</reference>
<reference key="3">
    <citation type="journal article" date="2003" name="J. Biol. Chem.">
        <title>A novel hematopoietic adaptor protein, Chat-H, positively regulates T cell receptor-mediated interleukin-2 production by Jurkat cells.</title>
        <authorList>
            <person name="Sakakibara A."/>
            <person name="Hattori S."/>
            <person name="Nakamura S."/>
            <person name="Katagiri T."/>
        </authorList>
    </citation>
    <scope>NUCLEOTIDE SEQUENCE [MRNA] (ISOFORM 1)</scope>
    <scope>FUNCTION</scope>
    <scope>INTERACTION WITH BCAR1; NEDD9 AND PTK2B</scope>
    <scope>TISSUE SPECIFICITY</scope>
    <scope>PHOSPHORYLATION</scope>
    <source>
        <tissue>Spleen</tissue>
    </source>
</reference>
<reference key="4">
    <citation type="journal article" date="2005" name="Science">
        <title>The transcriptional landscape of the mammalian genome.</title>
        <authorList>
            <person name="Carninci P."/>
            <person name="Kasukawa T."/>
            <person name="Katayama S."/>
            <person name="Gough J."/>
            <person name="Frith M.C."/>
            <person name="Maeda N."/>
            <person name="Oyama R."/>
            <person name="Ravasi T."/>
            <person name="Lenhard B."/>
            <person name="Wells C."/>
            <person name="Kodzius R."/>
            <person name="Shimokawa K."/>
            <person name="Bajic V.B."/>
            <person name="Brenner S.E."/>
            <person name="Batalov S."/>
            <person name="Forrest A.R."/>
            <person name="Zavolan M."/>
            <person name="Davis M.J."/>
            <person name="Wilming L.G."/>
            <person name="Aidinis V."/>
            <person name="Allen J.E."/>
            <person name="Ambesi-Impiombato A."/>
            <person name="Apweiler R."/>
            <person name="Aturaliya R.N."/>
            <person name="Bailey T.L."/>
            <person name="Bansal M."/>
            <person name="Baxter L."/>
            <person name="Beisel K.W."/>
            <person name="Bersano T."/>
            <person name="Bono H."/>
            <person name="Chalk A.M."/>
            <person name="Chiu K.P."/>
            <person name="Choudhary V."/>
            <person name="Christoffels A."/>
            <person name="Clutterbuck D.R."/>
            <person name="Crowe M.L."/>
            <person name="Dalla E."/>
            <person name="Dalrymple B.P."/>
            <person name="de Bono B."/>
            <person name="Della Gatta G."/>
            <person name="di Bernardo D."/>
            <person name="Down T."/>
            <person name="Engstrom P."/>
            <person name="Fagiolini M."/>
            <person name="Faulkner G."/>
            <person name="Fletcher C.F."/>
            <person name="Fukushima T."/>
            <person name="Furuno M."/>
            <person name="Futaki S."/>
            <person name="Gariboldi M."/>
            <person name="Georgii-Hemming P."/>
            <person name="Gingeras T.R."/>
            <person name="Gojobori T."/>
            <person name="Green R.E."/>
            <person name="Gustincich S."/>
            <person name="Harbers M."/>
            <person name="Hayashi Y."/>
            <person name="Hensch T.K."/>
            <person name="Hirokawa N."/>
            <person name="Hill D."/>
            <person name="Huminiecki L."/>
            <person name="Iacono M."/>
            <person name="Ikeo K."/>
            <person name="Iwama A."/>
            <person name="Ishikawa T."/>
            <person name="Jakt M."/>
            <person name="Kanapin A."/>
            <person name="Katoh M."/>
            <person name="Kawasawa Y."/>
            <person name="Kelso J."/>
            <person name="Kitamura H."/>
            <person name="Kitano H."/>
            <person name="Kollias G."/>
            <person name="Krishnan S.P."/>
            <person name="Kruger A."/>
            <person name="Kummerfeld S.K."/>
            <person name="Kurochkin I.V."/>
            <person name="Lareau L.F."/>
            <person name="Lazarevic D."/>
            <person name="Lipovich L."/>
            <person name="Liu J."/>
            <person name="Liuni S."/>
            <person name="McWilliam S."/>
            <person name="Madan Babu M."/>
            <person name="Madera M."/>
            <person name="Marchionni L."/>
            <person name="Matsuda H."/>
            <person name="Matsuzawa S."/>
            <person name="Miki H."/>
            <person name="Mignone F."/>
            <person name="Miyake S."/>
            <person name="Morris K."/>
            <person name="Mottagui-Tabar S."/>
            <person name="Mulder N."/>
            <person name="Nakano N."/>
            <person name="Nakauchi H."/>
            <person name="Ng P."/>
            <person name="Nilsson R."/>
            <person name="Nishiguchi S."/>
            <person name="Nishikawa S."/>
            <person name="Nori F."/>
            <person name="Ohara O."/>
            <person name="Okazaki Y."/>
            <person name="Orlando V."/>
            <person name="Pang K.C."/>
            <person name="Pavan W.J."/>
            <person name="Pavesi G."/>
            <person name="Pesole G."/>
            <person name="Petrovsky N."/>
            <person name="Piazza S."/>
            <person name="Reed J."/>
            <person name="Reid J.F."/>
            <person name="Ring B.Z."/>
            <person name="Ringwald M."/>
            <person name="Rost B."/>
            <person name="Ruan Y."/>
            <person name="Salzberg S.L."/>
            <person name="Sandelin A."/>
            <person name="Schneider C."/>
            <person name="Schoenbach C."/>
            <person name="Sekiguchi K."/>
            <person name="Semple C.A."/>
            <person name="Seno S."/>
            <person name="Sessa L."/>
            <person name="Sheng Y."/>
            <person name="Shibata Y."/>
            <person name="Shimada H."/>
            <person name="Shimada K."/>
            <person name="Silva D."/>
            <person name="Sinclair B."/>
            <person name="Sperling S."/>
            <person name="Stupka E."/>
            <person name="Sugiura K."/>
            <person name="Sultana R."/>
            <person name="Takenaka Y."/>
            <person name="Taki K."/>
            <person name="Tammoja K."/>
            <person name="Tan S.L."/>
            <person name="Tang S."/>
            <person name="Taylor M.S."/>
            <person name="Tegner J."/>
            <person name="Teichmann S.A."/>
            <person name="Ueda H.R."/>
            <person name="van Nimwegen E."/>
            <person name="Verardo R."/>
            <person name="Wei C.L."/>
            <person name="Yagi K."/>
            <person name="Yamanishi H."/>
            <person name="Zabarovsky E."/>
            <person name="Zhu S."/>
            <person name="Zimmer A."/>
            <person name="Hide W."/>
            <person name="Bult C."/>
            <person name="Grimmond S.M."/>
            <person name="Teasdale R.D."/>
            <person name="Liu E.T."/>
            <person name="Brusic V."/>
            <person name="Quackenbush J."/>
            <person name="Wahlestedt C."/>
            <person name="Mattick J.S."/>
            <person name="Hume D.A."/>
            <person name="Kai C."/>
            <person name="Sasaki D."/>
            <person name="Tomaru Y."/>
            <person name="Fukuda S."/>
            <person name="Kanamori-Katayama M."/>
            <person name="Suzuki M."/>
            <person name="Aoki J."/>
            <person name="Arakawa T."/>
            <person name="Iida J."/>
            <person name="Imamura K."/>
            <person name="Itoh M."/>
            <person name="Kato T."/>
            <person name="Kawaji H."/>
            <person name="Kawagashira N."/>
            <person name="Kawashima T."/>
            <person name="Kojima M."/>
            <person name="Kondo S."/>
            <person name="Konno H."/>
            <person name="Nakano K."/>
            <person name="Ninomiya N."/>
            <person name="Nishio T."/>
            <person name="Okada M."/>
            <person name="Plessy C."/>
            <person name="Shibata K."/>
            <person name="Shiraki T."/>
            <person name="Suzuki S."/>
            <person name="Tagami M."/>
            <person name="Waki K."/>
            <person name="Watahiki A."/>
            <person name="Okamura-Oho Y."/>
            <person name="Suzuki H."/>
            <person name="Kawai J."/>
            <person name="Hayashizaki Y."/>
        </authorList>
    </citation>
    <scope>NUCLEOTIDE SEQUENCE [LARGE SCALE MRNA] (ISOFORMS 1 AND 2)</scope>
    <source>
        <strain>C57BL/6J</strain>
        <strain>NOD</strain>
        <tissue>Cerebellum</tissue>
    </source>
</reference>
<reference key="5">
    <citation type="journal article" date="2009" name="PLoS Biol.">
        <title>Lineage-specific biology revealed by a finished genome assembly of the mouse.</title>
        <authorList>
            <person name="Church D.M."/>
            <person name="Goodstadt L."/>
            <person name="Hillier L.W."/>
            <person name="Zody M.C."/>
            <person name="Goldstein S."/>
            <person name="She X."/>
            <person name="Bult C.J."/>
            <person name="Agarwala R."/>
            <person name="Cherry J.L."/>
            <person name="DiCuccio M."/>
            <person name="Hlavina W."/>
            <person name="Kapustin Y."/>
            <person name="Meric P."/>
            <person name="Maglott D."/>
            <person name="Birtle Z."/>
            <person name="Marques A.C."/>
            <person name="Graves T."/>
            <person name="Zhou S."/>
            <person name="Teague B."/>
            <person name="Potamousis K."/>
            <person name="Churas C."/>
            <person name="Place M."/>
            <person name="Herschleb J."/>
            <person name="Runnheim R."/>
            <person name="Forrest D."/>
            <person name="Amos-Landgraf J."/>
            <person name="Schwartz D.C."/>
            <person name="Cheng Z."/>
            <person name="Lindblad-Toh K."/>
            <person name="Eichler E.E."/>
            <person name="Ponting C.P."/>
        </authorList>
    </citation>
    <scope>NUCLEOTIDE SEQUENCE [LARGE SCALE GENOMIC DNA]</scope>
    <source>
        <strain>C57BL/6J</strain>
    </source>
</reference>
<reference key="6">
    <citation type="journal article" date="2004" name="Genome Res.">
        <title>The status, quality, and expansion of the NIH full-length cDNA project: the Mammalian Gene Collection (MGC).</title>
        <authorList>
            <consortium name="The MGC Project Team"/>
        </authorList>
    </citation>
    <scope>NUCLEOTIDE SEQUENCE [LARGE SCALE MRNA] (ISOFORM 1)</scope>
</reference>
<reference key="7">
    <citation type="journal article" date="2004" name="J. Biol. Chem.">
        <title>SHEP1 function in cell migration is impaired by a single amino acid mutation that disrupts association with the scaffolding protein cas but not with Ras GTPases.</title>
        <authorList>
            <person name="Dail M."/>
            <person name="Kalo M.S."/>
            <person name="Seddon J.A."/>
            <person name="Cote J.-F."/>
            <person name="Vuori K."/>
            <person name="Pasquale E.B."/>
        </authorList>
    </citation>
    <scope>PHOSPHORYLATION AT TYR-273; TYR-278 AND TYR-787</scope>
    <scope>IDENTIFICATION BY MASS SPECTROMETRY</scope>
    <scope>MUTAGENESIS OF TYR-787</scope>
</reference>
<reference key="8">
    <citation type="journal article" date="2006" name="Immunity">
        <title>The hematopoietic isoform of Cas-Hef1-associated signal transducer regulates chemokine-induced inside-out signaling and T cell trafficking.</title>
        <authorList>
            <person name="Regelmann A.G."/>
            <person name="Danzl N.M."/>
            <person name="Wanjalla C."/>
            <person name="Alexandropoulos K."/>
        </authorList>
    </citation>
    <scope>FUNCTION</scope>
    <scope>INTERACTION WITH BCAR1 AND NEDD9</scope>
    <scope>SUBCELLULAR LOCATION</scope>
    <scope>TISSUE SPECIFICITY</scope>
    <scope>MUTAGENESIS OF TYR-787</scope>
</reference>
<reference key="9">
    <citation type="journal article" date="2009" name="Immunity">
        <title>The phagosomal proteome in interferon-gamma-activated macrophages.</title>
        <authorList>
            <person name="Trost M."/>
            <person name="English L."/>
            <person name="Lemieux S."/>
            <person name="Courcelles M."/>
            <person name="Desjardins M."/>
            <person name="Thibault P."/>
        </authorList>
    </citation>
    <scope>PHOSPHORYLATION [LARGE SCALE ANALYSIS] AT SER-435</scope>
    <scope>IDENTIFICATION BY MASS SPECTROMETRY [LARGE SCALE ANALYSIS]</scope>
</reference>
<reference key="10">
    <citation type="journal article" date="2010" name="Cell">
        <title>A tissue-specific atlas of mouse protein phosphorylation and expression.</title>
        <authorList>
            <person name="Huttlin E.L."/>
            <person name="Jedrychowski M.P."/>
            <person name="Elias J.E."/>
            <person name="Goswami T."/>
            <person name="Rad R."/>
            <person name="Beausoleil S.A."/>
            <person name="Villen J."/>
            <person name="Haas W."/>
            <person name="Sowa M.E."/>
            <person name="Gygi S.P."/>
        </authorList>
    </citation>
    <scope>PHOSPHORYLATION [LARGE SCALE ANALYSIS] AT SER-22; SER-354 AND SER-435</scope>
    <scope>IDENTIFICATION BY MASS SPECTROMETRY [LARGE SCALE ANALYSIS]</scope>
    <source>
        <tissue>Kidney</tissue>
        <tissue>Lung</tissue>
        <tissue>Spleen</tissue>
    </source>
</reference>
<reference key="11">
    <citation type="journal article" date="2010" name="J. Immunol.">
        <title>The adaptor protein Sh2d3c is critical for marginal zone B cell development and function.</title>
        <authorList>
            <person name="Al-Shami A."/>
            <person name="Wilkins C."/>
            <person name="Crisostomo J."/>
            <person name="Seshasayee D."/>
            <person name="Martin F."/>
            <person name="Xu N."/>
            <person name="Suwanichkul A."/>
            <person name="Anderson S.J."/>
            <person name="Oravecz T."/>
        </authorList>
    </citation>
    <scope>FUNCTION</scope>
    <scope>TISSUE SPECIFICITY</scope>
    <scope>DISRUPTION PHENOTYPE</scope>
</reference>
<reference key="12">
    <citation type="journal article" date="2010" name="J. Neurosci.">
        <title>The SRC homology 2 domain protein Shep1 plays an important role in the penetration of olfactory sensory axons into the forebrain.</title>
        <authorList>
            <person name="Wang L."/>
            <person name="Vervoort V."/>
            <person name="Wallez Y."/>
            <person name="Core N."/>
            <person name="Cremer H."/>
            <person name="Pasquale E.B."/>
        </authorList>
    </citation>
    <scope>FUNCTION</scope>
    <scope>INTERACTION WITH IGF1</scope>
    <scope>SUBCELLULAR LOCATION</scope>
    <scope>TISSUE SPECIFICITY</scope>
    <scope>DEVELOPMENTAL STAGE</scope>
    <scope>DISRUPTION PHENOTYPE</scope>
</reference>
<reference key="13">
    <citation type="journal article" date="2010" name="Proc. Natl. Acad. Sci. U.S.A.">
        <title>SHEP1 partners with CasL to promote marginal zone B-cell maturation.</title>
        <authorList>
            <person name="Browne C.D."/>
            <person name="Hoefer M.M."/>
            <person name="Chintalapati S.K."/>
            <person name="Cato M.H."/>
            <person name="Wallez Y."/>
            <person name="Ostertag D.V."/>
            <person name="Pasquale E.B."/>
            <person name="Rickert R.C."/>
        </authorList>
    </citation>
    <scope>FUNCTION</scope>
    <scope>INTERACTION WITH NEDD9</scope>
    <scope>SUBCELLULAR LOCATION</scope>
    <scope>TISSUE SPECIFICITY</scope>
    <scope>DISRUPTION PHENOTYPE</scope>
    <scope>MUTAGENESIS OF TYR-787</scope>
</reference>
<protein>
    <recommendedName>
        <fullName>SH2 domain-containing protein 3C</fullName>
    </recommendedName>
    <alternativeName>
        <fullName>Cas/HEF1-associated signal transducer</fullName>
    </alternativeName>
    <alternativeName>
        <fullName>SH2 domain-containing Eph receptor-binding protein 1</fullName>
    </alternativeName>
</protein>
<dbReference type="EMBL" id="AF168364">
    <property type="protein sequence ID" value="AAF13305.1"/>
    <property type="molecule type" value="mRNA"/>
</dbReference>
<dbReference type="EMBL" id="AB030442">
    <property type="protein sequence ID" value="BAA90557.1"/>
    <property type="molecule type" value="mRNA"/>
</dbReference>
<dbReference type="EMBL" id="AB043953">
    <property type="protein sequence ID" value="BAA96361.1"/>
    <property type="molecule type" value="mRNA"/>
</dbReference>
<dbReference type="EMBL" id="AK042709">
    <property type="protein sequence ID" value="BAC31340.1"/>
    <property type="molecule type" value="mRNA"/>
</dbReference>
<dbReference type="EMBL" id="AK155165">
    <property type="protein sequence ID" value="BAE33088.1"/>
    <property type="molecule type" value="mRNA"/>
</dbReference>
<dbReference type="EMBL" id="AL772271">
    <property type="status" value="NOT_ANNOTATED_CDS"/>
    <property type="molecule type" value="Genomic_DNA"/>
</dbReference>
<dbReference type="EMBL" id="BC113203">
    <property type="protein sequence ID" value="AAI13204.1"/>
    <property type="molecule type" value="mRNA"/>
</dbReference>
<dbReference type="CCDS" id="CCDS15928.1">
    <molecule id="Q9QZS8-1"/>
</dbReference>
<dbReference type="CCDS" id="CCDS57168.1">
    <molecule id="Q9QZS8-2"/>
</dbReference>
<dbReference type="RefSeq" id="NP_001239476.1">
    <molecule id="Q9QZS8-2"/>
    <property type="nucleotide sequence ID" value="NM_001252547.2"/>
</dbReference>
<dbReference type="RefSeq" id="NP_038809.1">
    <molecule id="Q9QZS8-1"/>
    <property type="nucleotide sequence ID" value="NM_013781.4"/>
</dbReference>
<dbReference type="SMR" id="Q9QZS8"/>
<dbReference type="DIP" id="DIP-42657N"/>
<dbReference type="FunCoup" id="Q9QZS8">
    <property type="interactions" value="557"/>
</dbReference>
<dbReference type="IntAct" id="Q9QZS8">
    <property type="interactions" value="3"/>
</dbReference>
<dbReference type="MINT" id="Q9QZS8"/>
<dbReference type="STRING" id="10090.ENSMUSP00000073866"/>
<dbReference type="GlyGen" id="Q9QZS8">
    <property type="glycosylation" value="2 sites, 1 O-linked glycan (1 site)"/>
</dbReference>
<dbReference type="iPTMnet" id="Q9QZS8"/>
<dbReference type="PhosphoSitePlus" id="Q9QZS8"/>
<dbReference type="jPOST" id="Q9QZS8"/>
<dbReference type="PaxDb" id="10090-ENSMUSP00000073866"/>
<dbReference type="PeptideAtlas" id="Q9QZS8"/>
<dbReference type="ProteomicsDB" id="261020">
    <molecule id="Q9QZS8-1"/>
</dbReference>
<dbReference type="ProteomicsDB" id="261021">
    <molecule id="Q9QZS8-2"/>
</dbReference>
<dbReference type="Antibodypedia" id="30796">
    <property type="antibodies" value="280 antibodies from 25 providers"/>
</dbReference>
<dbReference type="DNASU" id="27387"/>
<dbReference type="Ensembl" id="ENSMUST00000074248.11">
    <molecule id="Q9QZS8-1"/>
    <property type="protein sequence ID" value="ENSMUSP00000073866.5"/>
    <property type="gene ID" value="ENSMUSG00000059013.13"/>
</dbReference>
<dbReference type="Ensembl" id="ENSMUST00000113242.5">
    <molecule id="Q9QZS8-2"/>
    <property type="protein sequence ID" value="ENSMUSP00000108868.3"/>
    <property type="gene ID" value="ENSMUSG00000059013.13"/>
</dbReference>
<dbReference type="GeneID" id="27387"/>
<dbReference type="KEGG" id="mmu:27387"/>
<dbReference type="UCSC" id="uc008jgp.2">
    <molecule id="Q9QZS8-1"/>
    <property type="organism name" value="mouse"/>
</dbReference>
<dbReference type="UCSC" id="uc008jgr.2">
    <molecule id="Q9QZS8-2"/>
    <property type="organism name" value="mouse"/>
</dbReference>
<dbReference type="AGR" id="MGI:1351631"/>
<dbReference type="CTD" id="10044"/>
<dbReference type="MGI" id="MGI:1351631">
    <property type="gene designation" value="Sh2d3c"/>
</dbReference>
<dbReference type="VEuPathDB" id="HostDB:ENSMUSG00000059013"/>
<dbReference type="eggNOG" id="ENOG502QPX3">
    <property type="taxonomic scope" value="Eukaryota"/>
</dbReference>
<dbReference type="GeneTree" id="ENSGT00940000154130"/>
<dbReference type="HOGENOM" id="CLU_015281_0_0_1"/>
<dbReference type="InParanoid" id="Q9QZS8"/>
<dbReference type="OMA" id="MVHNSRM"/>
<dbReference type="OrthoDB" id="2412973at2759"/>
<dbReference type="PhylomeDB" id="Q9QZS8"/>
<dbReference type="TreeFam" id="TF323756"/>
<dbReference type="BioGRID-ORCS" id="27387">
    <property type="hits" value="2 hits in 76 CRISPR screens"/>
</dbReference>
<dbReference type="ChiTaRS" id="Sh2d3c">
    <property type="organism name" value="mouse"/>
</dbReference>
<dbReference type="PRO" id="PR:Q9QZS8"/>
<dbReference type="Proteomes" id="UP000000589">
    <property type="component" value="Chromosome 2"/>
</dbReference>
<dbReference type="RNAct" id="Q9QZS8">
    <property type="molecule type" value="protein"/>
</dbReference>
<dbReference type="Bgee" id="ENSMUSG00000059013">
    <property type="expression patterns" value="Expressed in granulocyte and 150 other cell types or tissues"/>
</dbReference>
<dbReference type="GO" id="GO:0030424">
    <property type="term" value="C:axon"/>
    <property type="evidence" value="ECO:0007669"/>
    <property type="project" value="UniProtKB-SubCell"/>
</dbReference>
<dbReference type="GO" id="GO:0005829">
    <property type="term" value="C:cytosol"/>
    <property type="evidence" value="ECO:0007669"/>
    <property type="project" value="Ensembl"/>
</dbReference>
<dbReference type="GO" id="GO:0032587">
    <property type="term" value="C:ruffle membrane"/>
    <property type="evidence" value="ECO:0007669"/>
    <property type="project" value="UniProtKB-SubCell"/>
</dbReference>
<dbReference type="GO" id="GO:0005085">
    <property type="term" value="F:guanyl-nucleotide exchange factor activity"/>
    <property type="evidence" value="ECO:0007669"/>
    <property type="project" value="InterPro"/>
</dbReference>
<dbReference type="GO" id="GO:0001784">
    <property type="term" value="F:phosphotyrosine residue binding"/>
    <property type="evidence" value="ECO:0007669"/>
    <property type="project" value="InterPro"/>
</dbReference>
<dbReference type="GO" id="GO:0005068">
    <property type="term" value="F:transmembrane receptor protein tyrosine kinase adaptor activity"/>
    <property type="evidence" value="ECO:0000304"/>
    <property type="project" value="MGI"/>
</dbReference>
<dbReference type="GO" id="GO:0007165">
    <property type="term" value="P:signal transduction"/>
    <property type="evidence" value="ECO:0000304"/>
    <property type="project" value="MGI"/>
</dbReference>
<dbReference type="GO" id="GO:0007264">
    <property type="term" value="P:small GTPase-mediated signal transduction"/>
    <property type="evidence" value="ECO:0007669"/>
    <property type="project" value="InterPro"/>
</dbReference>
<dbReference type="CDD" id="cd10337">
    <property type="entry name" value="SH2_BCAR3"/>
    <property type="match status" value="1"/>
</dbReference>
<dbReference type="FunFam" id="1.10.840.10:FF:000007">
    <property type="entry name" value="SH2 domain containing 3C (Predicted)"/>
    <property type="match status" value="1"/>
</dbReference>
<dbReference type="FunFam" id="3.30.505.10:FF:000013">
    <property type="entry name" value="SH2 domain-containing protein 3C isoform X1"/>
    <property type="match status" value="1"/>
</dbReference>
<dbReference type="Gene3D" id="1.10.840.10">
    <property type="entry name" value="Ras guanine-nucleotide exchange factors catalytic domain"/>
    <property type="match status" value="1"/>
</dbReference>
<dbReference type="Gene3D" id="3.30.505.10">
    <property type="entry name" value="SH2 domain"/>
    <property type="match status" value="1"/>
</dbReference>
<dbReference type="InterPro" id="IPR023578">
    <property type="entry name" value="Ras_GEF_dom_sf"/>
</dbReference>
<dbReference type="InterPro" id="IPR001895">
    <property type="entry name" value="RASGEF_cat_dom"/>
</dbReference>
<dbReference type="InterPro" id="IPR036964">
    <property type="entry name" value="RASGEF_cat_dom_sf"/>
</dbReference>
<dbReference type="InterPro" id="IPR000980">
    <property type="entry name" value="SH2"/>
</dbReference>
<dbReference type="InterPro" id="IPR051853">
    <property type="entry name" value="SH2-Ras-GEF_adapter"/>
</dbReference>
<dbReference type="InterPro" id="IPR036860">
    <property type="entry name" value="SH2_dom_sf"/>
</dbReference>
<dbReference type="InterPro" id="IPR044102">
    <property type="entry name" value="SH2_SHEP1/BCAR3/NSP1"/>
</dbReference>
<dbReference type="PANTHER" id="PTHR14247">
    <property type="entry name" value="BREAST CANCER ANTI-ESTROGEN RESISTANCE PROTEIN 3 HOMOLOG-LIKE PROTEIN"/>
    <property type="match status" value="1"/>
</dbReference>
<dbReference type="PANTHER" id="PTHR14247:SF6">
    <property type="entry name" value="SH2 DOMAIN-CONTAINING PROTEIN 3C"/>
    <property type="match status" value="1"/>
</dbReference>
<dbReference type="Pfam" id="PF00617">
    <property type="entry name" value="RasGEF"/>
    <property type="match status" value="1"/>
</dbReference>
<dbReference type="Pfam" id="PF00017">
    <property type="entry name" value="SH2"/>
    <property type="match status" value="1"/>
</dbReference>
<dbReference type="SMART" id="SM00147">
    <property type="entry name" value="RasGEF"/>
    <property type="match status" value="1"/>
</dbReference>
<dbReference type="SMART" id="SM00252">
    <property type="entry name" value="SH2"/>
    <property type="match status" value="1"/>
</dbReference>
<dbReference type="SUPFAM" id="SSF48366">
    <property type="entry name" value="Ras GEF"/>
    <property type="match status" value="1"/>
</dbReference>
<dbReference type="SUPFAM" id="SSF55550">
    <property type="entry name" value="SH2 domain"/>
    <property type="match status" value="1"/>
</dbReference>
<dbReference type="PROSITE" id="PS50009">
    <property type="entry name" value="RASGEF_CAT"/>
    <property type="match status" value="1"/>
</dbReference>
<dbReference type="PROSITE" id="PS50001">
    <property type="entry name" value="SH2"/>
    <property type="match status" value="1"/>
</dbReference>
<evidence type="ECO:0000250" key="1"/>
<evidence type="ECO:0000250" key="2">
    <source>
        <dbReference type="UniProtKB" id="Q8N5H7"/>
    </source>
</evidence>
<evidence type="ECO:0000255" key="3">
    <source>
        <dbReference type="PROSITE-ProRule" id="PRU00168"/>
    </source>
</evidence>
<evidence type="ECO:0000255" key="4">
    <source>
        <dbReference type="PROSITE-ProRule" id="PRU00191"/>
    </source>
</evidence>
<evidence type="ECO:0000256" key="5">
    <source>
        <dbReference type="SAM" id="MobiDB-lite"/>
    </source>
</evidence>
<evidence type="ECO:0000269" key="6">
    <source>
    </source>
</evidence>
<evidence type="ECO:0000269" key="7">
    <source>
    </source>
</evidence>
<evidence type="ECO:0000269" key="8">
    <source>
    </source>
</evidence>
<evidence type="ECO:0000269" key="9">
    <source>
    </source>
</evidence>
<evidence type="ECO:0000269" key="10">
    <source>
    </source>
</evidence>
<evidence type="ECO:0000269" key="11">
    <source>
    </source>
</evidence>
<evidence type="ECO:0000269" key="12">
    <source>
    </source>
</evidence>
<evidence type="ECO:0000269" key="13">
    <source>
    </source>
</evidence>
<evidence type="ECO:0000303" key="14">
    <source>
    </source>
</evidence>
<evidence type="ECO:0000303" key="15">
    <source>
    </source>
</evidence>
<evidence type="ECO:0007744" key="16">
    <source>
    </source>
</evidence>
<evidence type="ECO:0007744" key="17">
    <source>
    </source>
</evidence>
<sequence>MTEMPKKTGRKFKFFKFKGLGSLSNLPRSFSLRRSSASASIRSCPEPDTFEATQDDMVTLPKSPPAYARSSDMYSHMGTMPRPNIKKAQKQQAVQKAQEVSRESHLVSRRLPEPPDLEAAKEAGEGTEALLEDTAPSAVEVDPMRELEDLTVDTEKEQVPGDVSPERTAAELEAAGDYVKFSKEKYILDSSPEKLHKELEEELKLSSTDLRSHAWYHGRIPREVSETLVQRNGDFLIRDSLTSLGDYVLTCRWHNQALHFKINKVVVKAGESYTHIRYLFEQESFDHVPALVRYHVGSRKAVSEQSGAIIYCPVNRTFPLRYLEASYGLSQGSSKTASPASPSGSKGSHMKRRSITMTDGLTTDKVTRSDGCPNSTSLPHPRDSIRNCALSMDQIPDLHSPLSPISESPSSPAYSTVTRVHAPSATPSTSAQPASPVARRSSEPQLCPGNTPKPPGESDRAPHASPSHTLCKASPSPSLSSYSDPDSGHYCQLQPPVRGSREQAAGETPRKARGSGERQKELLENGVSDGEWGKTFTVPVVEATSSFNLATFQSQLIPKENRPLEVALLRKVKELLSEVDARTLARHVTKVDCLVARILGVTKEMQTLMGVRWGMELLTLPHGRQLRLDLLERFHTMSIMLAVDILGCTGSAEERAALLHKTIQLAAELRGTMGNMFSFAAVMGALEMAQISRLEQTWMTLRQRHTEGAILYEKKLKPFLKSLNEGKEGPPLSNTTFPHVLPFITLLECDSAPAEGPEPWGSTEHGVEVVLAHLEAARTVAHHGGLYHTNAEVKLQGFQARPELLEVFSTEFQMRLLWGSQGANSSQAWRYEKFDKVLTALSHKLEPAIRSSEL</sequence>
<comment type="function">
    <text evidence="2 11 12 13">Acts as an adapter protein that mediates cell signaling pathways involved in cellular functions such as cell adhesion and migration, tissue organization, and the regulation of the immune response (PubMed:20505138, PubMed:20881139, PubMed:20956287). Plays a role in integrin-mediated cell adhesion through BCAR1-CRK-RAPGEF1 signaling and activation of the small GTPase RAP1 (By similarity). Promotes cell migration and invasion through the extracellular matrix (PubMed:20881139). Required for marginal zone B-cell development and thymus-independent type 2 immune responses (PubMed:20505138, PubMed:20956287). Mediates migration and adhesion of B cells in the splenic marginal zone via promoting hyperphosphorylation of NEDD9/CASL (PubMed:20505138). Plays a role in CXCL13-induced chemotaxis of B-cells (PubMed:20505138, PubMed:20956287). Plays a role in the migration of olfactory sensory neurons (OSNs) into the forebrain and the innervation of the olfactory bulb by the OSN axons during development (PubMed:20881139). Required for the efficient tyrosine phosphorylation of BCAR1 in OSN axons (PubMed:20881139).</text>
</comment>
<comment type="function">
    <molecule>Isoform 1</molecule>
    <text evidence="8 10">Important regulator of chemokine-induced, integrin-mediated T lymphocyte adhesion and migration, acting upstream of RAP1 (PubMed:17174122). Required for tissue-specific adhesion of T lymphocytes to peripheral tissues (PubMed:17174122). Required for basal and CXCL2 stimulated serine-threonine phosphorylation of NEDD9 (PubMed:17174122). May be involved in the regulation of T-cell receptor-mediated IL2 production through the activation of the JNK pathway in T-cells (PubMed:12486027).</text>
</comment>
<comment type="function">
    <molecule>Isoform 2</molecule>
    <text evidence="7">May be involved in the BCAR1/CAS-mediated JNK activation pathway.</text>
</comment>
<comment type="subunit">
    <text evidence="2 6 7 10 13">Component of a complex comprised of SH2D3C, BCAR1/CAS, and CRK (By similarity). Within the complex, interacts with CRK and (via C-terminus) with BCAR1/CAS (via C-terminus) (PubMed:10692442, PubMed:17174122). Interacts with NEDD9/HEF1 (PubMed:20956287). Interacts with EPHB2 (PubMed:10542222).</text>
</comment>
<comment type="subunit">
    <molecule>Isoform 1</molecule>
    <text evidence="7 8 10">Interacts with NEDD9/HEF1 (PubMed:10692442, PubMed:17174122). Interacts with BCAR1/CAS (PubMed:10692442). Interacts with PTK2B (PubMed:12486027).</text>
</comment>
<comment type="subunit">
    <molecule>Isoform 2</molecule>
    <text evidence="7 12">Interacts (via C-terminus) with BCAR1/CAS (via C-terminus) (PubMed:10692442). Interacts with IGF1 (PubMed:20881139).</text>
</comment>
<comment type="interaction">
    <interactant intactId="EBI-7964037">
        <id>Q9QZS8</id>
    </interactant>
    <interactant intactId="EBI-2642891">
        <id>O35177</id>
        <label>Nedd9</label>
    </interactant>
    <organismsDiffer>false</organismsDiffer>
    <experiments>2</experiments>
</comment>
<comment type="subcellular location">
    <subcellularLocation>
        <location evidence="7 10 13">Cytoplasm</location>
    </subcellularLocation>
    <subcellularLocation>
        <location evidence="7">Cell membrane</location>
        <topology evidence="7">Peripheral membrane protein</topology>
    </subcellularLocation>
    <subcellularLocation>
        <location evidence="12">Cell projection</location>
        <location evidence="12">Axon</location>
    </subcellularLocation>
    <subcellularLocation>
        <location evidence="7">Cell projection</location>
        <location evidence="7">Ruffle membrane</location>
    </subcellularLocation>
    <text evidence="7 13">Associated with the membrane when EGF-stimulated (PubMed:10692442). Expressed at the cortical actin ring in B cells (PubMed:20956287).</text>
</comment>
<comment type="subcellular location">
    <molecule>Isoform 1</molecule>
    <subcellularLocation>
        <location evidence="10">Cell membrane</location>
        <topology evidence="10">Peripheral membrane protein</topology>
    </subcellularLocation>
</comment>
<comment type="alternative products">
    <event type="alternative splicing"/>
    <isoform>
        <id>Q9QZS8-1</id>
        <name>1</name>
        <name>Chat-H</name>
        <sequence type="displayed"/>
    </isoform>
    <isoform>
        <id>Q9QZS8-2</id>
        <name>2</name>
        <name>Chat</name>
        <sequence type="described" ref="VSP_017709"/>
    </isoform>
</comment>
<comment type="tissue specificity">
    <text evidence="10 11 12 13">Expressed in the olfactory bulb and olfactory sensory neurons (at protein level) (PubMed:20881139). Expressed in B cells (at protein level) (PubMed:20505138, PubMed:20956287). Expressed in T lymphocytes (PubMed:17174122).</text>
</comment>
<comment type="tissue specificity">
    <molecule>Isoform 1</molecule>
    <text evidence="6 7 8">Expressed in hematopoietic cells from spleen, lymph node and thymus (at protein level) (PubMed:10542222, PubMed:10692442, PubMed:12486027). Expressed weakly in the lung (at protein level) (PubMed:10692442).</text>
</comment>
<comment type="tissue specificity">
    <molecule>Isoform 2</molecule>
    <text evidence="7">Expressed in the brain, lung, kidney, and weakly expressed in the liver and lung (at protein level).</text>
</comment>
<comment type="developmental stage">
    <text evidence="12">Expressed in the developing OSNs at dpc 13.5 and 14.5 with reduced expression at dpc 16.5.</text>
</comment>
<comment type="domain">
    <text evidence="1">The C-terminal Cdc25-homology/Ras-GEF domain adopts a closed conformation rendering it incapable of carrying out canonical exchange factor function, this closed conformation is required for interaction with BCAR1.</text>
</comment>
<comment type="PTM">
    <molecule>Isoform 1</molecule>
    <text evidence="8">Phosphorylated by MAPK/ERK upon T-cell receptor stimulation in T-cells.</text>
</comment>
<comment type="disruption phenotype">
    <text evidence="11 12 13">In one study knockout mice are viable and born at the expected Mendelian rate (PubMed:20505138). In another study the majority of knockout mice die after birth, those that survive show severe lamination defects and loss of cellular organization in their olfactory bulb, with a reduction in gonadotropin-releasing hormone in the preoptic region of the hypothalamus (PubMed:20881139). Mice that die at birth are morphologically normal apart from a marked reduction in the size of the olfactory bulb, which exhibits abnormal cellular organization in the outer layers and a lack of innervation of OSNs (PubMed:20881139). At dpc 16.5 OSNs fail to extend into the marginal zone of the forming olfactory bulb from the basement membrane, and show a reduction in tyrosine phosphorylated BCAR1 (PubMed:20881139). Decrease in B cells in the splenic marginal zone (PubMed:20505138, PubMed:20956287).</text>
</comment>
<comment type="caution">
    <text evidence="11 12">It is unclear if the knockout of Sh2d3c causes lethality (PubMed:20505138, PubMed:20881139). One report in genetic knockout mice suggests it is viable (PubMed:20505138). Another report in the same strain but a different genetic knockout model suggests lethality (PubMed:20881139).</text>
</comment>
<accession>Q9QZS8</accession>
<accession>A2AK84</accession>
<accession>Q9JME1</accession>
<keyword id="KW-0025">Alternative splicing</keyword>
<keyword id="KW-1003">Cell membrane</keyword>
<keyword id="KW-0966">Cell projection</keyword>
<keyword id="KW-0963">Cytoplasm</keyword>
<keyword id="KW-0472">Membrane</keyword>
<keyword id="KW-0597">Phosphoprotein</keyword>
<keyword id="KW-1185">Reference proteome</keyword>
<keyword id="KW-0727">SH2 domain</keyword>